<sequence>MGKTGNIEHVEERVESELMPPSMYKVILNNDDYTPMDFVIEVLQIFFRKNEQEATDIMLTIHHQGKGICGIFPYGIAETKVIQVNQFARQNQHPLLCSLEKA</sequence>
<proteinExistence type="inferred from homology"/>
<protein>
    <recommendedName>
        <fullName evidence="1">ATP-dependent Clp protease adapter protein ClpS</fullName>
    </recommendedName>
</protein>
<evidence type="ECO:0000255" key="1">
    <source>
        <dbReference type="HAMAP-Rule" id="MF_00302"/>
    </source>
</evidence>
<comment type="function">
    <text evidence="1">Involved in the modulation of the specificity of the ClpAP-mediated ATP-dependent protein degradation.</text>
</comment>
<comment type="subunit">
    <text evidence="1">Binds to the N-terminal domain of the chaperone ClpA.</text>
</comment>
<comment type="similarity">
    <text evidence="1">Belongs to the ClpS family.</text>
</comment>
<feature type="chain" id="PRO_1000022628" description="ATP-dependent Clp protease adapter protein ClpS">
    <location>
        <begin position="1"/>
        <end position="102"/>
    </location>
</feature>
<name>CLPS_SHESA</name>
<reference key="1">
    <citation type="submission" date="2006-09" db="EMBL/GenBank/DDBJ databases">
        <title>Complete sequence of chromosome 1 of Shewanella sp. ANA-3.</title>
        <authorList>
            <person name="Copeland A."/>
            <person name="Lucas S."/>
            <person name="Lapidus A."/>
            <person name="Barry K."/>
            <person name="Detter J.C."/>
            <person name="Glavina del Rio T."/>
            <person name="Hammon N."/>
            <person name="Israni S."/>
            <person name="Dalin E."/>
            <person name="Tice H."/>
            <person name="Pitluck S."/>
            <person name="Chertkov O."/>
            <person name="Brettin T."/>
            <person name="Bruce D."/>
            <person name="Han C."/>
            <person name="Tapia R."/>
            <person name="Gilna P."/>
            <person name="Schmutz J."/>
            <person name="Larimer F."/>
            <person name="Land M."/>
            <person name="Hauser L."/>
            <person name="Kyrpides N."/>
            <person name="Kim E."/>
            <person name="Newman D."/>
            <person name="Salticov C."/>
            <person name="Konstantinidis K."/>
            <person name="Klappenback J."/>
            <person name="Tiedje J."/>
            <person name="Richardson P."/>
        </authorList>
    </citation>
    <scope>NUCLEOTIDE SEQUENCE [LARGE SCALE GENOMIC DNA]</scope>
    <source>
        <strain>ANA-3</strain>
    </source>
</reference>
<dbReference type="EMBL" id="CP000469">
    <property type="protein sequence ID" value="ABK47985.1"/>
    <property type="molecule type" value="Genomic_DNA"/>
</dbReference>
<dbReference type="RefSeq" id="WP_011622425.1">
    <property type="nucleotide sequence ID" value="NC_008577.1"/>
</dbReference>
<dbReference type="SMR" id="A0KW16"/>
<dbReference type="STRING" id="94122.Shewana3_1752"/>
<dbReference type="GeneID" id="94727743"/>
<dbReference type="KEGG" id="shn:Shewana3_1752"/>
<dbReference type="eggNOG" id="COG2127">
    <property type="taxonomic scope" value="Bacteria"/>
</dbReference>
<dbReference type="HOGENOM" id="CLU_134358_2_1_6"/>
<dbReference type="OrthoDB" id="9796121at2"/>
<dbReference type="Proteomes" id="UP000002589">
    <property type="component" value="Chromosome"/>
</dbReference>
<dbReference type="GO" id="GO:0030163">
    <property type="term" value="P:protein catabolic process"/>
    <property type="evidence" value="ECO:0007669"/>
    <property type="project" value="InterPro"/>
</dbReference>
<dbReference type="GO" id="GO:0006508">
    <property type="term" value="P:proteolysis"/>
    <property type="evidence" value="ECO:0007669"/>
    <property type="project" value="UniProtKB-UniRule"/>
</dbReference>
<dbReference type="FunFam" id="3.30.1390.10:FF:000002">
    <property type="entry name" value="ATP-dependent Clp protease adapter protein ClpS"/>
    <property type="match status" value="1"/>
</dbReference>
<dbReference type="Gene3D" id="3.30.1390.10">
    <property type="match status" value="1"/>
</dbReference>
<dbReference type="HAMAP" id="MF_00302">
    <property type="entry name" value="ClpS"/>
    <property type="match status" value="1"/>
</dbReference>
<dbReference type="InterPro" id="IPR022935">
    <property type="entry name" value="ClpS"/>
</dbReference>
<dbReference type="InterPro" id="IPR003769">
    <property type="entry name" value="ClpS_core"/>
</dbReference>
<dbReference type="InterPro" id="IPR014719">
    <property type="entry name" value="Ribosomal_bL12_C/ClpS-like"/>
</dbReference>
<dbReference type="NCBIfam" id="NF000670">
    <property type="entry name" value="PRK00033.1-3"/>
    <property type="match status" value="1"/>
</dbReference>
<dbReference type="NCBIfam" id="NF000672">
    <property type="entry name" value="PRK00033.1-5"/>
    <property type="match status" value="1"/>
</dbReference>
<dbReference type="PANTHER" id="PTHR33473:SF19">
    <property type="entry name" value="ATP-DEPENDENT CLP PROTEASE ADAPTER PROTEIN CLPS"/>
    <property type="match status" value="1"/>
</dbReference>
<dbReference type="PANTHER" id="PTHR33473">
    <property type="entry name" value="ATP-DEPENDENT CLP PROTEASE ADAPTER PROTEIN CLPS1, CHLOROPLASTIC"/>
    <property type="match status" value="1"/>
</dbReference>
<dbReference type="Pfam" id="PF02617">
    <property type="entry name" value="ClpS"/>
    <property type="match status" value="1"/>
</dbReference>
<dbReference type="SUPFAM" id="SSF54736">
    <property type="entry name" value="ClpS-like"/>
    <property type="match status" value="1"/>
</dbReference>
<gene>
    <name evidence="1" type="primary">clpS</name>
    <name type="ordered locus">Shewana3_1752</name>
</gene>
<accession>A0KW16</accession>
<organism>
    <name type="scientific">Shewanella sp. (strain ANA-3)</name>
    <dbReference type="NCBI Taxonomy" id="94122"/>
    <lineage>
        <taxon>Bacteria</taxon>
        <taxon>Pseudomonadati</taxon>
        <taxon>Pseudomonadota</taxon>
        <taxon>Gammaproteobacteria</taxon>
        <taxon>Alteromonadales</taxon>
        <taxon>Shewanellaceae</taxon>
        <taxon>Shewanella</taxon>
    </lineage>
</organism>